<dbReference type="EMBL" id="U86764">
    <property type="protein sequence ID" value="AAD00621.1"/>
    <property type="molecule type" value="mRNA"/>
</dbReference>
<dbReference type="EMBL" id="U86765">
    <property type="protein sequence ID" value="AAD00622.1"/>
    <property type="molecule type" value="Genomic_DNA"/>
</dbReference>
<dbReference type="EMBL" id="U86766">
    <property type="protein sequence ID" value="AAD00623.1"/>
    <property type="molecule type" value="mRNA"/>
</dbReference>
<dbReference type="EMBL" id="U86767">
    <property type="protein sequence ID" value="AAD00624.1"/>
    <property type="molecule type" value="mRNA"/>
</dbReference>
<dbReference type="RefSeq" id="NP_989641.2">
    <molecule id="Q9YH18-1"/>
    <property type="nucleotide sequence ID" value="NM_204310.3"/>
</dbReference>
<dbReference type="RefSeq" id="XP_015139487.1">
    <molecule id="Q9YH18-3"/>
    <property type="nucleotide sequence ID" value="XM_015284001.4"/>
</dbReference>
<dbReference type="RefSeq" id="XP_015139489.1">
    <molecule id="Q9YH18-2"/>
    <property type="nucleotide sequence ID" value="XM_015284003.4"/>
</dbReference>
<dbReference type="RefSeq" id="XP_046768852.1">
    <molecule id="Q9YH18-3"/>
    <property type="nucleotide sequence ID" value="XM_046912896.1"/>
</dbReference>
<dbReference type="RefSeq" id="XP_046768856.1">
    <molecule id="Q9YH18-2"/>
    <property type="nucleotide sequence ID" value="XM_046912900.1"/>
</dbReference>
<dbReference type="SMR" id="Q9YH18"/>
<dbReference type="FunCoup" id="Q9YH18">
    <property type="interactions" value="2318"/>
</dbReference>
<dbReference type="STRING" id="9031.ENSGALP00000018821"/>
<dbReference type="PaxDb" id="9031-ENSGALP00000018821"/>
<dbReference type="Ensembl" id="ENSGALT00010014472.1">
    <molecule id="Q9YH18-1"/>
    <property type="protein sequence ID" value="ENSGALP00010008493.1"/>
    <property type="gene ID" value="ENSGALG00010006041.1"/>
</dbReference>
<dbReference type="GeneID" id="374204"/>
<dbReference type="KEGG" id="gga:374204"/>
<dbReference type="CTD" id="9444"/>
<dbReference type="VEuPathDB" id="HostDB:geneid_374204"/>
<dbReference type="eggNOG" id="KOG1588">
    <property type="taxonomic scope" value="Eukaryota"/>
</dbReference>
<dbReference type="GeneTree" id="ENSGT00940000155310"/>
<dbReference type="InParanoid" id="Q9YH18"/>
<dbReference type="OrthoDB" id="6777263at2759"/>
<dbReference type="PhylomeDB" id="Q9YH18"/>
<dbReference type="PRO" id="PR:Q9YH18"/>
<dbReference type="Proteomes" id="UP000000539">
    <property type="component" value="Chromosome 3"/>
</dbReference>
<dbReference type="Bgee" id="ENSGALG00000011555">
    <property type="expression patterns" value="Expressed in cerebellum and 13 other cell types or tissues"/>
</dbReference>
<dbReference type="GO" id="GO:0005737">
    <property type="term" value="C:cytoplasm"/>
    <property type="evidence" value="ECO:0007669"/>
    <property type="project" value="UniProtKB-SubCell"/>
</dbReference>
<dbReference type="GO" id="GO:0005634">
    <property type="term" value="C:nucleus"/>
    <property type="evidence" value="ECO:0000318"/>
    <property type="project" value="GO_Central"/>
</dbReference>
<dbReference type="GO" id="GO:0045202">
    <property type="term" value="C:synapse"/>
    <property type="evidence" value="ECO:0007669"/>
    <property type="project" value="Ensembl"/>
</dbReference>
<dbReference type="GO" id="GO:0160089">
    <property type="term" value="F:internal N(7)-methylguanine-containing RNA reader activity"/>
    <property type="evidence" value="ECO:0007669"/>
    <property type="project" value="Ensembl"/>
</dbReference>
<dbReference type="GO" id="GO:0003730">
    <property type="term" value="F:mRNA 3'-UTR binding"/>
    <property type="evidence" value="ECO:0007669"/>
    <property type="project" value="Ensembl"/>
</dbReference>
<dbReference type="GO" id="GO:0003729">
    <property type="term" value="F:mRNA binding"/>
    <property type="evidence" value="ECO:0000318"/>
    <property type="project" value="GO_Central"/>
</dbReference>
<dbReference type="GO" id="GO:0017124">
    <property type="term" value="F:SH3 domain binding"/>
    <property type="evidence" value="ECO:0007669"/>
    <property type="project" value="UniProtKB-KW"/>
</dbReference>
<dbReference type="GO" id="GO:0008298">
    <property type="term" value="P:intracellular mRNA localization"/>
    <property type="evidence" value="ECO:0007669"/>
    <property type="project" value="Ensembl"/>
</dbReference>
<dbReference type="GO" id="GO:0042759">
    <property type="term" value="P:long-chain fatty acid biosynthetic process"/>
    <property type="evidence" value="ECO:0007669"/>
    <property type="project" value="Ensembl"/>
</dbReference>
<dbReference type="GO" id="GO:0014004">
    <property type="term" value="P:microglia differentiation"/>
    <property type="evidence" value="ECO:0007669"/>
    <property type="project" value="Ensembl"/>
</dbReference>
<dbReference type="GO" id="GO:0051028">
    <property type="term" value="P:mRNA transport"/>
    <property type="evidence" value="ECO:0007669"/>
    <property type="project" value="UniProtKB-KW"/>
</dbReference>
<dbReference type="GO" id="GO:0042552">
    <property type="term" value="P:myelination"/>
    <property type="evidence" value="ECO:0007669"/>
    <property type="project" value="Ensembl"/>
</dbReference>
<dbReference type="GO" id="GO:1990764">
    <property type="term" value="P:myofibroblast contraction"/>
    <property type="evidence" value="ECO:0007669"/>
    <property type="project" value="Ensembl"/>
</dbReference>
<dbReference type="GO" id="GO:1905869">
    <property type="term" value="P:negative regulation of 3'-UTR-mediated mRNA stabilization"/>
    <property type="evidence" value="ECO:0007669"/>
    <property type="project" value="Ensembl"/>
</dbReference>
<dbReference type="GO" id="GO:0120163">
    <property type="term" value="P:negative regulation of cold-induced thermogenesis"/>
    <property type="evidence" value="ECO:0007669"/>
    <property type="project" value="Ensembl"/>
</dbReference>
<dbReference type="GO" id="GO:0045650">
    <property type="term" value="P:negative regulation of macrophage differentiation"/>
    <property type="evidence" value="ECO:0000250"/>
    <property type="project" value="UniProtKB"/>
</dbReference>
<dbReference type="GO" id="GO:0017148">
    <property type="term" value="P:negative regulation of translation"/>
    <property type="evidence" value="ECO:0007669"/>
    <property type="project" value="Ensembl"/>
</dbReference>
<dbReference type="GO" id="GO:0010628">
    <property type="term" value="P:positive regulation of gene expression"/>
    <property type="evidence" value="ECO:0007669"/>
    <property type="project" value="Ensembl"/>
</dbReference>
<dbReference type="GO" id="GO:0048714">
    <property type="term" value="P:positive regulation of oligodendrocyte differentiation"/>
    <property type="evidence" value="ECO:0007669"/>
    <property type="project" value="Ensembl"/>
</dbReference>
<dbReference type="GO" id="GO:0048710">
    <property type="term" value="P:regulation of astrocyte differentiation"/>
    <property type="evidence" value="ECO:0000250"/>
    <property type="project" value="UniProtKB"/>
</dbReference>
<dbReference type="GO" id="GO:0010717">
    <property type="term" value="P:regulation of epithelial to mesenchymal transition"/>
    <property type="evidence" value="ECO:0007669"/>
    <property type="project" value="Ensembl"/>
</dbReference>
<dbReference type="GO" id="GO:0048024">
    <property type="term" value="P:regulation of mRNA splicing, via spliceosome"/>
    <property type="evidence" value="ECO:0000318"/>
    <property type="project" value="GO_Central"/>
</dbReference>
<dbReference type="GO" id="GO:0007286">
    <property type="term" value="P:spermatid development"/>
    <property type="evidence" value="ECO:0007669"/>
    <property type="project" value="Ensembl"/>
</dbReference>
<dbReference type="GO" id="GO:0160091">
    <property type="term" value="P:spliceosome-depend formation of circular RNA"/>
    <property type="evidence" value="ECO:0000250"/>
    <property type="project" value="UniProtKB"/>
</dbReference>
<dbReference type="GO" id="GO:0035886">
    <property type="term" value="P:vascular associated smooth muscle cell differentiation"/>
    <property type="evidence" value="ECO:0007669"/>
    <property type="project" value="Ensembl"/>
</dbReference>
<dbReference type="GO" id="GO:0001570">
    <property type="term" value="P:vasculogenesis"/>
    <property type="evidence" value="ECO:0007669"/>
    <property type="project" value="Ensembl"/>
</dbReference>
<dbReference type="CDD" id="cd22465">
    <property type="entry name" value="KH-I_Hqk"/>
    <property type="match status" value="1"/>
</dbReference>
<dbReference type="FunFam" id="1.20.5.4010:FF:000001">
    <property type="entry name" value="protein quaking isoform X1"/>
    <property type="match status" value="1"/>
</dbReference>
<dbReference type="FunFam" id="3.30.1370.10:FF:000055">
    <property type="entry name" value="protein quaking isoform X1"/>
    <property type="match status" value="1"/>
</dbReference>
<dbReference type="Gene3D" id="1.20.5.4010">
    <property type="match status" value="1"/>
</dbReference>
<dbReference type="Gene3D" id="3.30.1370.10">
    <property type="entry name" value="K Homology domain, type 1"/>
    <property type="match status" value="1"/>
</dbReference>
<dbReference type="InterPro" id="IPR045071">
    <property type="entry name" value="BBP-like"/>
</dbReference>
<dbReference type="InterPro" id="IPR055256">
    <property type="entry name" value="KH_1_KHDC4/BBP-like"/>
</dbReference>
<dbReference type="InterPro" id="IPR004087">
    <property type="entry name" value="KH_dom"/>
</dbReference>
<dbReference type="InterPro" id="IPR036612">
    <property type="entry name" value="KH_dom_type_1_sf"/>
</dbReference>
<dbReference type="InterPro" id="IPR032367">
    <property type="entry name" value="Quaking_NLS"/>
</dbReference>
<dbReference type="InterPro" id="IPR032377">
    <property type="entry name" value="STAR_dimer"/>
</dbReference>
<dbReference type="PANTHER" id="PTHR11208:SF125">
    <property type="entry name" value="KH DOMAIN-CONTAINING RNA-BINDING PROTEIN QKI"/>
    <property type="match status" value="1"/>
</dbReference>
<dbReference type="PANTHER" id="PTHR11208">
    <property type="entry name" value="RNA-BINDING PROTEIN RELATED"/>
    <property type="match status" value="1"/>
</dbReference>
<dbReference type="Pfam" id="PF22675">
    <property type="entry name" value="KH-I_KHDC4-BBP"/>
    <property type="match status" value="1"/>
</dbReference>
<dbReference type="Pfam" id="PF16551">
    <property type="entry name" value="Quaking_NLS"/>
    <property type="match status" value="1"/>
</dbReference>
<dbReference type="Pfam" id="PF16544">
    <property type="entry name" value="STAR_dimer"/>
    <property type="match status" value="1"/>
</dbReference>
<dbReference type="SMART" id="SM00322">
    <property type="entry name" value="KH"/>
    <property type="match status" value="1"/>
</dbReference>
<dbReference type="SUPFAM" id="SSF54791">
    <property type="entry name" value="Eukaryotic type KH-domain (KH-domain type I)"/>
    <property type="match status" value="1"/>
</dbReference>
<protein>
    <recommendedName>
        <fullName evidence="3">KH domain-containing RNA-binding protein QKI</fullName>
    </recommendedName>
    <alternativeName>
        <fullName evidence="3">Protein quaking</fullName>
    </alternativeName>
</protein>
<reference key="1">
    <citation type="journal article" date="1998" name="Mol. Reprod. Dev.">
        <title>Four isoforms of the signal-transduction and RNA-binding protein QKI expressed during chicken spermatogenesis.</title>
        <authorList>
            <person name="Mezquita J."/>
            <person name="Pau M."/>
            <person name="Mezquita C."/>
        </authorList>
    </citation>
    <scope>NUCLEOTIDE SEQUENCE [GENOMIC DNA / MRNA] (ISOFORMS 1; 2; 3 AND 4)</scope>
    <source>
        <strain>Hubbard White Mountain</strain>
        <tissue>Testis</tissue>
    </source>
</reference>
<accession>Q9YH18</accession>
<accession>Q9PST2</accession>
<accession>Q9YH19</accession>
<accession>Q9YH20</accession>
<gene>
    <name evidence="3" type="primary">QKI</name>
</gene>
<feature type="chain" id="PRO_0000239377" description="KH domain-containing RNA-binding protein QKI">
    <location>
        <begin position="1"/>
        <end position="340"/>
    </location>
</feature>
<feature type="domain" description="KH">
    <location>
        <begin position="87"/>
        <end position="153"/>
    </location>
</feature>
<feature type="short sequence motif" description="SH3-binding">
    <location>
        <begin position="275"/>
        <end position="278"/>
    </location>
</feature>
<feature type="short sequence motif" description="Nuclear localization signal" evidence="3">
    <location>
        <begin position="323"/>
        <end position="329"/>
    </location>
</feature>
<feature type="splice variant" id="VSP_019200" description="In isoform 3." evidence="4">
    <original>K</original>
    <variation>KVSFKSRDNHDPAVLEVE</variation>
    <location>
        <position position="134"/>
    </location>
</feature>
<feature type="splice variant" id="VSP_019201" description="In isoform 4." evidence="4">
    <original>EGE</original>
    <variation>WET</variation>
    <location>
        <begin position="184"/>
        <end position="186"/>
    </location>
</feature>
<feature type="splice variant" id="VSP_019202" description="In isoform 4." evidence="4">
    <location>
        <begin position="187"/>
        <end position="340"/>
    </location>
</feature>
<feature type="splice variant" id="VSP_019203" description="In isoform 2 and isoform 3." evidence="4">
    <location>
        <begin position="213"/>
        <end position="220"/>
    </location>
</feature>
<feature type="sequence conflict" description="In Ref. 1; AAD00624." evidence="5" ref="1">
    <original>W</original>
    <variation>R</variation>
    <location>
        <position position="144"/>
    </location>
</feature>
<feature type="sequence conflict" description="In Ref. 1; AAD00623." evidence="5" ref="1">
    <original>D</original>
    <variation>G</variation>
    <location>
        <position position="206"/>
    </location>
</feature>
<comment type="function">
    <text evidence="1 2 3">RNA reader protein, which recognizes and binds specific RNAs, thereby regulating RNA metabolic processes, such as pre-mRNA splicing, circular RNA (circRNA) formation, mRNA export, mRNA stability and/or translation (By similarity). Involved in various cellular processes, such as mRNA storage into stress granules, apoptosis, interferon response, glial cell fate and development. Binds to the 5'-NACUAAY-N(1,20)-UAAY-3' RNA core sequence (By similarity). Acts as a mRNA modification reader that specifically recognizes and binds mRNA transcripts modified by internal N(7)-methylguanine (m7G) (By similarity). Promotes the formation of circular RNAs (circRNAs): acts by binding to sites flanking circRNA-forming exons. CircRNAs are produced by back-splicing circularization of pre-mRNAs. Required to protect and promote stability of mRNAs which promotes oligodendrocyte differentiation (By similarity). Acts as an important regulator of muscle development (By similarity).</text>
</comment>
<comment type="subunit">
    <text evidence="3">Homodimer; does not require RNA to homodimerize.</text>
</comment>
<comment type="subcellular location">
    <subcellularLocation>
        <location evidence="3">Cytoplasm</location>
    </subcellularLocation>
    <subcellularLocation>
        <location evidence="3">Nucleus</location>
    </subcellularLocation>
</comment>
<comment type="alternative products">
    <event type="alternative splicing"/>
    <isoform>
        <id>Q9YH18-1</id>
        <name>1</name>
        <name>QkI-1</name>
        <sequence type="displayed"/>
    </isoform>
    <isoform>
        <id>Q9YH18-2</id>
        <name>2</name>
        <name>QkI-2</name>
        <sequence type="described" ref="VSP_019203"/>
    </isoform>
    <isoform>
        <id>Q9YH18-3</id>
        <name>3</name>
        <name>QkI-3</name>
        <sequence type="described" ref="VSP_019200 VSP_019203"/>
    </isoform>
    <isoform>
        <id>Q9YH18-4</id>
        <name>4</name>
        <name>QkI-4</name>
        <sequence type="described" ref="VSP_019201 VSP_019202"/>
    </isoform>
</comment>
<comment type="miscellaneous">
    <molecule>Isoform 1</molecule>
    <text>Major isoform.</text>
</comment>
<comment type="similarity">
    <text evidence="5">Belongs to the quaking family.</text>
</comment>
<name>QKI_CHICK</name>
<organism>
    <name type="scientific">Gallus gallus</name>
    <name type="common">Chicken</name>
    <dbReference type="NCBI Taxonomy" id="9031"/>
    <lineage>
        <taxon>Eukaryota</taxon>
        <taxon>Metazoa</taxon>
        <taxon>Chordata</taxon>
        <taxon>Craniata</taxon>
        <taxon>Vertebrata</taxon>
        <taxon>Euteleostomi</taxon>
        <taxon>Archelosauria</taxon>
        <taxon>Archosauria</taxon>
        <taxon>Dinosauria</taxon>
        <taxon>Saurischia</taxon>
        <taxon>Theropoda</taxon>
        <taxon>Coelurosauria</taxon>
        <taxon>Aves</taxon>
        <taxon>Neognathae</taxon>
        <taxon>Galloanserae</taxon>
        <taxon>Galliformes</taxon>
        <taxon>Phasianidae</taxon>
        <taxon>Phasianinae</taxon>
        <taxon>Gallus</taxon>
    </lineage>
</organism>
<proteinExistence type="evidence at transcript level"/>
<sequence>MVGEMEAKEKPKPSPDYLMQLMNDKKLMSSLPNFCGIFNHLERLLDEEISRVRKDMYNDTLNGSTEKRSAELPDAVGPIVQLQEKLYVPVKEYPDFNFVGRILGPRGLTAKQLEAETGCKIMVRGKGSMRDKKKEEQNRGKPNWEHLNEDLHVLITVEDAQNRAEIKLKRAVEEVKKLLIPAAEGEDSLKKMQLMELAILNGTYRDANIKSPALAFSLAATAQAPRIITGPAPVLPPAALRTPTPAGPTIMPLIRQIQTAVMPNGTPHPTAAIVPPGPEAGLIYTPYEYPYTLAPATSILEYPIEPSGVLGAVATKVRRHDMRVHPYQRIVTADRAATGN</sequence>
<keyword id="KW-0025">Alternative splicing</keyword>
<keyword id="KW-0963">Cytoplasm</keyword>
<keyword id="KW-0217">Developmental protein</keyword>
<keyword id="KW-0221">Differentiation</keyword>
<keyword id="KW-0507">mRNA processing</keyword>
<keyword id="KW-0508">mRNA splicing</keyword>
<keyword id="KW-0509">mRNA transport</keyword>
<keyword id="KW-0539">Nucleus</keyword>
<keyword id="KW-1185">Reference proteome</keyword>
<keyword id="KW-0694">RNA-binding</keyword>
<keyword id="KW-0729">SH3-binding</keyword>
<keyword id="KW-0810">Translation regulation</keyword>
<keyword id="KW-0813">Transport</keyword>
<evidence type="ECO:0000250" key="1">
    <source>
        <dbReference type="UniProtKB" id="Q6P0D0"/>
    </source>
</evidence>
<evidence type="ECO:0000250" key="2">
    <source>
        <dbReference type="UniProtKB" id="Q96PU8"/>
    </source>
</evidence>
<evidence type="ECO:0000250" key="3">
    <source>
        <dbReference type="UniProtKB" id="Q9QYS9"/>
    </source>
</evidence>
<evidence type="ECO:0000303" key="4">
    <source>
    </source>
</evidence>
<evidence type="ECO:0000305" key="5"/>